<sequence length="517" mass="56733">MAGLLSTFDTFSSRRSESINKSGGGAVIPGQRSTVSVFVLGPSVTDDADKLFIATTFLAHSLDTDKQHSQRGGFLVSLLAMAYSSPELYLTTNGVNADVKYVIYNIEKDPKRTKTDGFIVKTRDMEYERTTEWLFGPMVNKSPLFQGQRDAADPDTLLQTYGYPACLGAIIVQVWIVLVKAITSSAGLRKGFFNRLEAFRQDGTVKGALVFTGETVEGIGSVMRSQQSLVSLMVETLVTMNTARSDLTTLEKNIQIVGNYIRDAGLASFMNTIKYGVETKMAALTLSNLRPDINKLRSLIDTYLSKGPRAPFICILKDPVHGEFAPGNYPALWSYAMGVAVVQNKAMQQYVTGRTYLDMEMFLLGQAVAKDAESKISSALEDELGVTDTAKERLRHHLANLSGGDGAYHKPTGGGAIEVALDNADIDLETEAHADQDARGWGGESGERWARQVSGGHFVTLHGAERLEEETNDEDVSDIERRIAMRLAERRQGILQPMEMKAAITVWITTKMTMPQQ</sequence>
<comment type="function">
    <text evidence="2 3 4">Forms the helical nucleocapsid (NC) in a ratio of 1 N per 6 ribonucleotides, protecting the genome from nucleases (By similarity). The NC has a helical structure with either 13.07 N per turn, approximately 20 nm in diameter, with a hollow central cavity approximately 5 nm in diameter (PubMed:2539515). The encapsidated genomic RNA serves as template for transcription and replication; encapsidation by N is coupled to RNA synthesis. Forms the encapsidation complex with the phosphoprotein protein P. Before encapsidation, the newly synthesized free N protein, so-called N0, is chaperoned by P (By similarity).</text>
</comment>
<comment type="subunit">
    <text evidence="1 2 3">Homomultimer; forms the nucleocapsid (By similarity). Binds to the viral genomic RNA (By similarity). N0 interacts with the phosphoprotein (via N-terminus); this interaction allows P to chaperon N0 to avoid N polymerization before encapsidation (By similarity). Interacts as N-RNA template with the phosphoprotein (via C-terminus); this interaction positions the polymerase on the template (By similarity).</text>
</comment>
<comment type="subcellular location">
    <subcellularLocation>
        <location evidence="5">Virion</location>
    </subcellularLocation>
    <subcellularLocation>
        <location>Host cytoplasm</location>
    </subcellularLocation>
</comment>
<comment type="domain">
    <text evidence="2">Ncore is globular and carries regions required for self-assembly and RNA-binding. Ntail is an intrinsically disordered monomeric domain in the C-terminus.</text>
</comment>
<comment type="miscellaneous">
    <text evidence="5">Most abundant protein in the virion. Since the viral RNA genome consists of 15,383 bases,there are 2564 molecules per encapsidated genome.</text>
</comment>
<comment type="similarity">
    <text evidence="5">Belongs to the paramyxoviruses nucleocapsid family.</text>
</comment>
<name>NCAP_SENDE</name>
<feature type="chain" id="PRO_0000142680" description="Nucleoprotein">
    <location>
        <begin position="1"/>
        <end position="517"/>
    </location>
</feature>
<feature type="region of interest" description="Ncore" evidence="2">
    <location>
        <begin position="1"/>
        <end position="404"/>
    </location>
</feature>
<feature type="region of interest" description="Ntail" evidence="2">
    <location>
        <begin position="405"/>
        <end position="517"/>
    </location>
</feature>
<feature type="region of interest" description="Homomultimerization" evidence="3">
    <location>
        <begin position="440"/>
        <end position="461"/>
    </location>
</feature>
<feature type="region of interest" description="Interaction with the phosphoprotein" evidence="3">
    <location>
        <begin position="462"/>
        <end position="471"/>
    </location>
</feature>
<feature type="binding site" evidence="1">
    <location>
        <position position="180"/>
    </location>
    <ligand>
        <name>RNA</name>
        <dbReference type="ChEBI" id="CHEBI:33697"/>
    </ligand>
</feature>
<feature type="binding site" evidence="1">
    <location>
        <position position="190"/>
    </location>
    <ligand>
        <name>RNA</name>
        <dbReference type="ChEBI" id="CHEBI:33697"/>
    </ligand>
</feature>
<feature type="binding site" evidence="1">
    <location>
        <position position="195"/>
    </location>
    <ligand>
        <name>RNA</name>
        <dbReference type="ChEBI" id="CHEBI:33697"/>
    </ligand>
</feature>
<feature type="binding site" evidence="1">
    <location>
        <position position="260"/>
    </location>
    <ligand>
        <name>RNA</name>
        <dbReference type="ChEBI" id="CHEBI:33697"/>
    </ligand>
</feature>
<feature type="binding site" evidence="1">
    <location>
        <position position="350"/>
    </location>
    <ligand>
        <name>RNA</name>
        <dbReference type="ChEBI" id="CHEBI:33697"/>
    </ligand>
</feature>
<feature type="binding site" evidence="1">
    <location>
        <position position="354"/>
    </location>
    <ligand>
        <name>RNA</name>
        <dbReference type="ChEBI" id="CHEBI:33697"/>
    </ligand>
</feature>
<gene>
    <name type="primary">N</name>
    <name type="synonym">NP</name>
</gene>
<evidence type="ECO:0000250" key="1">
    <source>
        <dbReference type="UniProtKB" id="O57286"/>
    </source>
</evidence>
<evidence type="ECO:0000250" key="2">
    <source>
        <dbReference type="UniProtKB" id="P06159"/>
    </source>
</evidence>
<evidence type="ECO:0000250" key="3">
    <source>
        <dbReference type="UniProtKB" id="Q07097"/>
    </source>
</evidence>
<evidence type="ECO:0000269" key="4">
    <source>
    </source>
</evidence>
<evidence type="ECO:0000305" key="5"/>
<keyword id="KW-0002">3D-structure</keyword>
<keyword id="KW-0167">Capsid protein</keyword>
<keyword id="KW-1139">Helical capsid protein</keyword>
<keyword id="KW-1035">Host cytoplasm</keyword>
<keyword id="KW-0687">Ribonucleoprotein</keyword>
<keyword id="KW-0694">RNA-binding</keyword>
<keyword id="KW-0543">Viral nucleoprotein</keyword>
<keyword id="KW-0946">Virion</keyword>
<organismHost>
    <name type="scientific">Cavia cutleri</name>
    <name type="common">Guinea pig</name>
    <dbReference type="NCBI Taxonomy" id="10144"/>
</organismHost>
<organismHost>
    <name type="scientific">Cricetidae sp.</name>
    <name type="common">Hamster</name>
    <dbReference type="NCBI Taxonomy" id="36483"/>
</organismHost>
<organismHost>
    <name type="scientific">Mus musculus</name>
    <name type="common">Mouse</name>
    <dbReference type="NCBI Taxonomy" id="10090"/>
</organismHost>
<organismHost>
    <name type="scientific">Rattus norvegicus</name>
    <name type="common">Rat</name>
    <dbReference type="NCBI Taxonomy" id="10116"/>
</organismHost>
<reference key="1">
    <citation type="journal article" date="1984" name="Virology">
        <title>Complete sequence of the Sendai virus NP gene from a cloned insert.</title>
        <authorList>
            <person name="Morgan E.M."/>
            <person name="Re G.G."/>
            <person name="Kingsbury D.W."/>
        </authorList>
    </citation>
    <scope>NUCLEOTIDE SEQUENCE [GENOMIC RNA]</scope>
</reference>
<reference key="2">
    <citation type="journal article" date="1989" name="J. Virol.">
        <title>The Sendai virus nucleocapsid exists in at least four different helical states.</title>
        <authorList>
            <person name="Egelman E.H."/>
            <person name="Wu S.-S."/>
            <person name="Amrein M."/>
            <person name="Portner A."/>
            <person name="Murti G."/>
        </authorList>
    </citation>
    <scope>STRUCTURE BY ELECTRON MICROSCOPY (24 ANGSTROMS) OF THE NUCLEOCAPSID</scope>
    <scope>SUBCELLULAR LOCATION</scope>
</reference>
<dbReference type="PDB" id="1FZK">
    <property type="method" value="X-ray"/>
    <property type="resolution" value="1.70 A"/>
    <property type="chains" value="P=324-332"/>
</dbReference>
<dbReference type="PDB" id="1FZO">
    <property type="method" value="X-ray"/>
    <property type="resolution" value="1.80 A"/>
    <property type="chains" value="P=324-332"/>
</dbReference>
<dbReference type="PDB" id="1KPV">
    <property type="method" value="X-ray"/>
    <property type="resolution" value="1.71 A"/>
    <property type="chains" value="P=324-332"/>
</dbReference>
<dbReference type="PDB" id="1QLF">
    <property type="method" value="X-ray"/>
    <property type="resolution" value="2.65 A"/>
    <property type="chains" value="C=324-332"/>
</dbReference>
<dbReference type="PDB" id="2VAB">
    <property type="method" value="X-ray"/>
    <property type="resolution" value="2.50 A"/>
    <property type="chains" value="P=324-332"/>
</dbReference>
<dbReference type="PDBsum" id="1FZK"/>
<dbReference type="PDBsum" id="1FZO"/>
<dbReference type="PDBsum" id="1KPV"/>
<dbReference type="PDBsum" id="1QLF"/>
<dbReference type="PDBsum" id="2VAB"/>
<dbReference type="BMRB" id="P04857"/>
<dbReference type="SMR" id="P04857"/>
<dbReference type="EvolutionaryTrace" id="P04857"/>
<dbReference type="GO" id="GO:0019029">
    <property type="term" value="C:helical viral capsid"/>
    <property type="evidence" value="ECO:0007669"/>
    <property type="project" value="UniProtKB-KW"/>
</dbReference>
<dbReference type="GO" id="GO:0030430">
    <property type="term" value="C:host cell cytoplasm"/>
    <property type="evidence" value="ECO:0007669"/>
    <property type="project" value="UniProtKB-SubCell"/>
</dbReference>
<dbReference type="GO" id="GO:1990904">
    <property type="term" value="C:ribonucleoprotein complex"/>
    <property type="evidence" value="ECO:0007669"/>
    <property type="project" value="UniProtKB-KW"/>
</dbReference>
<dbReference type="GO" id="GO:0019013">
    <property type="term" value="C:viral nucleocapsid"/>
    <property type="evidence" value="ECO:0007669"/>
    <property type="project" value="UniProtKB-KW"/>
</dbReference>
<dbReference type="GO" id="GO:0003723">
    <property type="term" value="F:RNA binding"/>
    <property type="evidence" value="ECO:0007669"/>
    <property type="project" value="UniProtKB-KW"/>
</dbReference>
<dbReference type="GO" id="GO:0005198">
    <property type="term" value="F:structural molecule activity"/>
    <property type="evidence" value="ECO:0007669"/>
    <property type="project" value="InterPro"/>
</dbReference>
<dbReference type="InterPro" id="IPR002021">
    <property type="entry name" value="Paramyx_ncap"/>
</dbReference>
<dbReference type="Pfam" id="PF00973">
    <property type="entry name" value="Paramyxo_ncap"/>
    <property type="match status" value="1"/>
</dbReference>
<organism>
    <name type="scientific">Sendai virus (strain Enders)</name>
    <name type="common">SeV</name>
    <dbReference type="NCBI Taxonomy" id="11194"/>
    <lineage>
        <taxon>Viruses</taxon>
        <taxon>Riboviria</taxon>
        <taxon>Orthornavirae</taxon>
        <taxon>Negarnaviricota</taxon>
        <taxon>Haploviricotina</taxon>
        <taxon>Monjiviricetes</taxon>
        <taxon>Mononegavirales</taxon>
        <taxon>Paramyxoviridae</taxon>
        <taxon>Feraresvirinae</taxon>
        <taxon>Respirovirus</taxon>
        <taxon>Respirovirus muris</taxon>
    </lineage>
</organism>
<proteinExistence type="evidence at protein level"/>
<accession>P04857</accession>
<protein>
    <recommendedName>
        <fullName>Nucleoprotein</fullName>
    </recommendedName>
    <alternativeName>
        <fullName>Nucleocapsid protein</fullName>
        <shortName>NP</shortName>
        <shortName>Protein N</shortName>
    </alternativeName>
</protein>